<accession>Q8IZL8</accession>
<accession>O15450</accession>
<accession>Q5EGN3</accession>
<accession>Q6NTE6</accession>
<accession>Q96FT1</accession>
<accession>Q9BU60</accession>
<feature type="initiator methionine" description="Removed" evidence="25 28 29">
    <location>
        <position position="1"/>
    </location>
</feature>
<feature type="chain" id="PRO_0000252135" description="Proline-, glutamic acid- and leucine-rich protein 1">
    <location>
        <begin position="2"/>
        <end position="1130"/>
    </location>
</feature>
<feature type="region of interest" description="Required for modulation of ESR1 transcriptional activity" evidence="5">
    <location>
        <begin position="2"/>
        <end position="80"/>
    </location>
</feature>
<feature type="region of interest" description="Required for modulation of ESR1 transcriptional activity" evidence="5">
    <location>
        <begin position="121"/>
        <end position="189"/>
    </location>
</feature>
<feature type="region of interest" description="Disordered" evidence="2">
    <location>
        <begin position="473"/>
        <end position="497"/>
    </location>
</feature>
<feature type="region of interest" description="Disordered" evidence="2">
    <location>
        <begin position="639"/>
        <end position="1130"/>
    </location>
</feature>
<feature type="short sequence motif" description="LXXLL motif 1">
    <location>
        <begin position="33"/>
        <end position="37"/>
    </location>
</feature>
<feature type="short sequence motif" description="LXXLL motif 2">
    <location>
        <begin position="69"/>
        <end position="73"/>
    </location>
</feature>
<feature type="short sequence motif" description="LXXLL motif 3">
    <location>
        <begin position="111"/>
        <end position="115"/>
    </location>
</feature>
<feature type="short sequence motif" description="LXXLL motif 4">
    <location>
        <begin position="155"/>
        <end position="159"/>
    </location>
</feature>
<feature type="short sequence motif" description="LXXLL motif 5">
    <location>
        <begin position="177"/>
        <end position="181"/>
    </location>
</feature>
<feature type="short sequence motif" description="LXXLL motif 6">
    <location>
        <begin position="264"/>
        <end position="268"/>
    </location>
</feature>
<feature type="short sequence motif" description="LXXLL motif 7">
    <location>
        <begin position="271"/>
        <end position="275"/>
    </location>
</feature>
<feature type="short sequence motif" description="LXXLL motif 8">
    <location>
        <begin position="364"/>
        <end position="368"/>
    </location>
</feature>
<feature type="short sequence motif" description="LXXLL motif 9">
    <location>
        <begin position="459"/>
        <end position="463"/>
    </location>
</feature>
<feature type="short sequence motif" description="LXXLL motif 10">
    <location>
        <begin position="579"/>
        <end position="583"/>
    </location>
</feature>
<feature type="short sequence motif" description="LXXLL motif 11">
    <location>
        <begin position="584"/>
        <end position="588"/>
    </location>
</feature>
<feature type="compositionally biased region" description="Pro residues" evidence="2">
    <location>
        <begin position="639"/>
        <end position="671"/>
    </location>
</feature>
<feature type="compositionally biased region" description="Low complexity" evidence="2">
    <location>
        <begin position="672"/>
        <end position="684"/>
    </location>
</feature>
<feature type="compositionally biased region" description="Pro residues" evidence="2">
    <location>
        <begin position="685"/>
        <end position="703"/>
    </location>
</feature>
<feature type="compositionally biased region" description="Acidic residues" evidence="2">
    <location>
        <begin position="774"/>
        <end position="786"/>
    </location>
</feature>
<feature type="compositionally biased region" description="Pro residues" evidence="2">
    <location>
        <begin position="794"/>
        <end position="824"/>
    </location>
</feature>
<feature type="compositionally biased region" description="Pro residues" evidence="2">
    <location>
        <begin position="835"/>
        <end position="860"/>
    </location>
</feature>
<feature type="compositionally biased region" description="Acidic residues" evidence="2">
    <location>
        <begin position="886"/>
        <end position="964"/>
    </location>
</feature>
<feature type="compositionally biased region" description="Pro residues" evidence="2">
    <location>
        <begin position="976"/>
        <end position="998"/>
    </location>
</feature>
<feature type="compositionally biased region" description="Acidic residues" evidence="2">
    <location>
        <begin position="1083"/>
        <end position="1104"/>
    </location>
</feature>
<feature type="modified residue" description="N-acetylalanine" evidence="25 28 29">
    <location>
        <position position="2"/>
    </location>
</feature>
<feature type="modified residue" description="Phosphoserine" evidence="1">
    <location>
        <position position="13"/>
    </location>
</feature>
<feature type="modified residue" description="Phosphoserine" evidence="24 26 27 30">
    <location>
        <position position="477"/>
    </location>
</feature>
<feature type="modified residue" description="Phosphoserine" evidence="22 24 26 27 30 31">
    <location>
        <position position="481"/>
    </location>
</feature>
<feature type="modified residue" description="Phosphothreonine" evidence="27">
    <location>
        <position position="488"/>
    </location>
</feature>
<feature type="modified residue" description="Phosphothreonine" evidence="24 27">
    <location>
        <position position="745"/>
    </location>
</feature>
<feature type="modified residue" description="Phosphoserine" evidence="23 26 27 30">
    <location>
        <position position="1033"/>
    </location>
</feature>
<feature type="modified residue" description="Phosphoserine" evidence="24 27">
    <location>
        <position position="1043"/>
    </location>
</feature>
<feature type="cross-link" description="Glycyl lysine isopeptide (Lys-Gly) (interchain with G-Cter in SUMO)" evidence="16">
    <location>
        <position position="826"/>
    </location>
</feature>
<feature type="sequence variant" id="VAR_027766" description="In dbSNP:rs9436.">
    <original>T</original>
    <variation>S</variation>
    <location>
        <position position="1126"/>
    </location>
</feature>
<feature type="mutagenesis site" description="Not sumoylated." evidence="16">
    <original>K</original>
    <variation>R</variation>
    <location>
        <position position="826"/>
    </location>
</feature>
<feature type="sequence conflict" description="In Ref. 2; AAC17708." evidence="19" ref="2">
    <original>A</original>
    <variation>V</variation>
    <location>
        <position position="2"/>
    </location>
</feature>
<feature type="helix" evidence="32">
    <location>
        <begin position="32"/>
        <end position="41"/>
    </location>
</feature>
<feature type="helix" evidence="32">
    <location>
        <begin position="42"/>
        <end position="44"/>
    </location>
</feature>
<feature type="turn" evidence="32">
    <location>
        <begin position="63"/>
        <end position="65"/>
    </location>
</feature>
<feature type="helix" evidence="32">
    <location>
        <begin position="66"/>
        <end position="76"/>
    </location>
</feature>
<feature type="helix" evidence="32">
    <location>
        <begin position="86"/>
        <end position="100"/>
    </location>
</feature>
<feature type="strand" evidence="32">
    <location>
        <begin position="101"/>
        <end position="104"/>
    </location>
</feature>
<feature type="helix" evidence="32">
    <location>
        <begin position="105"/>
        <end position="118"/>
    </location>
</feature>
<feature type="helix" evidence="32">
    <location>
        <begin position="121"/>
        <end position="139"/>
    </location>
</feature>
<feature type="helix" evidence="32">
    <location>
        <begin position="145"/>
        <end position="162"/>
    </location>
</feature>
<feature type="helix" evidence="32">
    <location>
        <begin position="166"/>
        <end position="185"/>
    </location>
</feature>
<feature type="helix" evidence="32">
    <location>
        <begin position="189"/>
        <end position="191"/>
    </location>
</feature>
<feature type="helix" evidence="32">
    <location>
        <begin position="192"/>
        <end position="205"/>
    </location>
</feature>
<feature type="helix" evidence="32">
    <location>
        <begin position="208"/>
        <end position="213"/>
    </location>
</feature>
<feature type="helix" evidence="32">
    <location>
        <begin position="214"/>
        <end position="225"/>
    </location>
</feature>
<feature type="helix" evidence="32">
    <location>
        <begin position="230"/>
        <end position="240"/>
    </location>
</feature>
<feature type="helix" evidence="32">
    <location>
        <begin position="241"/>
        <end position="245"/>
    </location>
</feature>
<feature type="helix" evidence="32">
    <location>
        <begin position="250"/>
        <end position="278"/>
    </location>
</feature>
<feature type="helix" evidence="32">
    <location>
        <begin position="306"/>
        <end position="326"/>
    </location>
</feature>
<feature type="helix" evidence="32">
    <location>
        <begin position="338"/>
        <end position="349"/>
    </location>
</feature>
<feature type="strand" evidence="32">
    <location>
        <begin position="353"/>
        <end position="356"/>
    </location>
</feature>
<feature type="helix" evidence="32">
    <location>
        <begin position="362"/>
        <end position="387"/>
    </location>
</feature>
<feature type="helix" evidence="32">
    <location>
        <begin position="388"/>
        <end position="394"/>
    </location>
</feature>
<feature type="helix" evidence="32">
    <location>
        <begin position="395"/>
        <end position="408"/>
    </location>
</feature>
<feature type="strand" evidence="32">
    <location>
        <begin position="418"/>
        <end position="420"/>
    </location>
</feature>
<feature type="helix" evidence="32">
    <location>
        <begin position="425"/>
        <end position="442"/>
    </location>
</feature>
<feature type="helix" evidence="32">
    <location>
        <begin position="443"/>
        <end position="445"/>
    </location>
</feature>
<feature type="helix" evidence="32">
    <location>
        <begin position="452"/>
        <end position="466"/>
    </location>
</feature>
<feature type="helix" evidence="32">
    <location>
        <begin position="519"/>
        <end position="536"/>
    </location>
</feature>
<feature type="turn" evidence="32">
    <location>
        <begin position="537"/>
        <end position="539"/>
    </location>
</feature>
<feature type="helix" evidence="32">
    <location>
        <begin position="542"/>
        <end position="560"/>
    </location>
</feature>
<feature type="helix" evidence="32">
    <location>
        <begin position="569"/>
        <end position="571"/>
    </location>
</feature>
<feature type="helix" evidence="32">
    <location>
        <begin position="573"/>
        <end position="588"/>
    </location>
</feature>
<feature type="helix" evidence="32">
    <location>
        <begin position="598"/>
        <end position="608"/>
    </location>
</feature>
<feature type="helix" evidence="32">
    <location>
        <begin position="614"/>
        <end position="631"/>
    </location>
</feature>
<evidence type="ECO:0000250" key="1">
    <source>
        <dbReference type="UniProtKB" id="Q9DBD5"/>
    </source>
</evidence>
<evidence type="ECO:0000256" key="2">
    <source>
        <dbReference type="SAM" id="MobiDB-lite"/>
    </source>
</evidence>
<evidence type="ECO:0000269" key="3">
    <source>
    </source>
</evidence>
<evidence type="ECO:0000269" key="4">
    <source>
    </source>
</evidence>
<evidence type="ECO:0000269" key="5">
    <source>
    </source>
</evidence>
<evidence type="ECO:0000269" key="6">
    <source>
    </source>
</evidence>
<evidence type="ECO:0000269" key="7">
    <source>
    </source>
</evidence>
<evidence type="ECO:0000269" key="8">
    <source>
    </source>
</evidence>
<evidence type="ECO:0000269" key="9">
    <source>
    </source>
</evidence>
<evidence type="ECO:0000269" key="10">
    <source>
    </source>
</evidence>
<evidence type="ECO:0000269" key="11">
    <source>
    </source>
</evidence>
<evidence type="ECO:0000269" key="12">
    <source>
    </source>
</evidence>
<evidence type="ECO:0000269" key="13">
    <source>
    </source>
</evidence>
<evidence type="ECO:0000269" key="14">
    <source>
    </source>
</evidence>
<evidence type="ECO:0000269" key="15">
    <source>
    </source>
</evidence>
<evidence type="ECO:0000269" key="16">
    <source>
    </source>
</evidence>
<evidence type="ECO:0000269" key="17">
    <source>
    </source>
</evidence>
<evidence type="ECO:0000269" key="18">
    <source>
    </source>
</evidence>
<evidence type="ECO:0000305" key="19"/>
<evidence type="ECO:0000305" key="20">
    <source>
    </source>
</evidence>
<evidence type="ECO:0000305" key="21">
    <source>
    </source>
</evidence>
<evidence type="ECO:0007744" key="22">
    <source>
    </source>
</evidence>
<evidence type="ECO:0007744" key="23">
    <source>
    </source>
</evidence>
<evidence type="ECO:0007744" key="24">
    <source>
    </source>
</evidence>
<evidence type="ECO:0007744" key="25">
    <source>
    </source>
</evidence>
<evidence type="ECO:0007744" key="26">
    <source>
    </source>
</evidence>
<evidence type="ECO:0007744" key="27">
    <source>
    </source>
</evidence>
<evidence type="ECO:0007744" key="28">
    <source>
    </source>
</evidence>
<evidence type="ECO:0007744" key="29">
    <source>
    </source>
</evidence>
<evidence type="ECO:0007744" key="30">
    <source>
    </source>
</evidence>
<evidence type="ECO:0007744" key="31">
    <source>
    </source>
</evidence>
<evidence type="ECO:0007829" key="32">
    <source>
        <dbReference type="PDB" id="7UWF"/>
    </source>
</evidence>
<organism>
    <name type="scientific">Homo sapiens</name>
    <name type="common">Human</name>
    <dbReference type="NCBI Taxonomy" id="9606"/>
    <lineage>
        <taxon>Eukaryota</taxon>
        <taxon>Metazoa</taxon>
        <taxon>Chordata</taxon>
        <taxon>Craniata</taxon>
        <taxon>Vertebrata</taxon>
        <taxon>Euteleostomi</taxon>
        <taxon>Mammalia</taxon>
        <taxon>Eutheria</taxon>
        <taxon>Euarchontoglires</taxon>
        <taxon>Primates</taxon>
        <taxon>Haplorrhini</taxon>
        <taxon>Catarrhini</taxon>
        <taxon>Hominidae</taxon>
        <taxon>Homo</taxon>
    </lineage>
</organism>
<gene>
    <name type="primary">PELP1</name>
    <name type="synonym">HMX3</name>
    <name type="synonym">MNAR</name>
</gene>
<reference key="1">
    <citation type="journal article" date="2004" name="Genome Res.">
        <title>The status, quality, and expansion of the NIH full-length cDNA project: the Mammalian Gene Collection (MGC).</title>
        <authorList>
            <consortium name="The MGC Project Team"/>
        </authorList>
    </citation>
    <scope>NUCLEOTIDE SEQUENCE [LARGE SCALE MRNA]</scope>
    <source>
        <tissue>Brain</tissue>
        <tissue>Lung</tissue>
        <tissue>Testis</tissue>
    </source>
</reference>
<reference key="2">
    <citation type="journal article" date="2001" name="J. Biol. Chem.">
        <title>Molecular cloning and characterization of PELP1, a novel human coregulator of estrogen receptor alpha.</title>
        <authorList>
            <person name="Vadlamudi R.K."/>
            <person name="Wang R.-A."/>
            <person name="Mazumdar A."/>
            <person name="Kim Y.-S."/>
            <person name="Shin J."/>
            <person name="Sahin A."/>
            <person name="Kumar R."/>
        </authorList>
    </citation>
    <scope>NUCLEOTIDE SEQUENCE [MRNA] OF 1-356</scope>
    <scope>FUNCTION</scope>
    <scope>INTERACTION WITH ESR1; CREBBP AND EP300</scope>
    <scope>SUBCELLULAR LOCATION</scope>
    <scope>TISSUE SPECIFICITY</scope>
    <scope>DOMAIN</scope>
</reference>
<reference key="3">
    <citation type="submission" date="2005-01" db="EMBL/GenBank/DDBJ databases">
        <title>Human transcription factor HMX3.</title>
        <authorList>
            <person name="Lei W."/>
            <person name="Harrod K.S."/>
        </authorList>
    </citation>
    <scope>NUCLEOTIDE SEQUENCE [MRNA] OF 70-1130</scope>
</reference>
<reference key="4">
    <citation type="journal article" date="2002" name="Proc. Natl. Acad. Sci. U.S.A.">
        <title>Estrogen receptor-interacting protein that modulates its nongenomic activity-crosstalk with Src/Erk phosphorylation cascade.</title>
        <authorList>
            <person name="Wong C.-W."/>
            <person name="McNally C."/>
            <person name="Nickbarg E."/>
            <person name="Komm B.S."/>
            <person name="Cheskis B.J."/>
        </authorList>
    </citation>
    <scope>RETRACTED PAPER</scope>
</reference>
<reference key="5">
    <citation type="journal article" date="2009" name="Proc. Natl. Acad. Sci. U.S.A.">
        <authorList>
            <person name="Wong C.W."/>
            <person name="McNally C."/>
            <person name="Nickbarg E."/>
            <person name="Komm B.S."/>
            <person name="Cheskis B.J."/>
        </authorList>
    </citation>
    <scope>RETRACTION NOTICE OF PUBMED:12415108</scope>
</reference>
<reference key="6">
    <citation type="journal article" date="2003" name="J. Biol. Chem.">
        <title>Functional interactions between the estrogen receptor coactivator PELP1/MNAR and retinoblastoma protein.</title>
        <authorList>
            <person name="Balasenthil S."/>
            <person name="Vadlamudi R.K."/>
        </authorList>
    </citation>
    <scope>FUNCTION</scope>
    <scope>INTERACTION WITH RB1</scope>
</reference>
<reference key="7">
    <citation type="journal article" date="2004" name="Mol. Endocrinol.">
        <title>Characterization of the interactions of estrogen receptor and MNAR in the activation of cSrc.</title>
        <authorList>
            <person name="Barletta F."/>
            <person name="Wong C.-W."/>
            <person name="McNally C."/>
            <person name="Komm B.S."/>
            <person name="Katzenellenbogen B."/>
            <person name="Cheskis B.J."/>
        </authorList>
    </citation>
    <scope>FUNCTION</scope>
    <scope>INTERACTION WITH ESR1 AND SRC</scope>
</reference>
<reference key="8">
    <citation type="journal article" date="2004" name="Cancer Res.">
        <title>Potential role of a novel transcriptional coactivator PELP1 in histone H1 displacement in cancer cells.</title>
        <authorList>
            <person name="Nair S.S."/>
            <person name="Mishra S.K."/>
            <person name="Yang Z."/>
            <person name="Balasenthil S."/>
            <person name="Kumar R."/>
            <person name="Vadlamudi R.K."/>
        </authorList>
    </citation>
    <scope>FUNCTION</scope>
    <scope>INTERACTION WITH HISTONE H1 AND H3</scope>
</reference>
<reference key="9">
    <citation type="journal article" date="2004" name="J. Biol. Chem.">
        <title>The transcriptional corepressor, PELP1, recruits HDAC2 and masks histones using two separate domains.</title>
        <authorList>
            <person name="Choi Y.B."/>
            <person name="Ko J.K."/>
            <person name="Shin J."/>
        </authorList>
    </citation>
    <scope>FUNCTION</scope>
    <scope>DOMAIN</scope>
    <scope>INTERACTION WITH HDAC2</scope>
</reference>
<reference key="10">
    <citation type="journal article" date="2004" name="J. Clin. Endocrinol. Metab.">
        <title>Deregulation of estrogen receptor coactivator proline-, glutamic acid-, and leucine-rich protein-1/modulator of nongenomic activity of estrogen receptor in human endometrial tumors.</title>
        <authorList>
            <person name="Vadlamudi R.K."/>
            <person name="Balasenthil S."/>
            <person name="Broaddus R.R."/>
            <person name="Gustafsson J.-A."/>
            <person name="Kumar R."/>
        </authorList>
    </citation>
    <scope>FUNCTION</scope>
    <scope>SUBCELLULAR LOCATION</scope>
</reference>
<reference key="11">
    <citation type="journal article" date="2005" name="Cancer Res.">
        <title>Functional implications of altered subcellular localization of PELP1 in breast cancer cells.</title>
        <authorList>
            <person name="Vadlamudi R.K."/>
            <person name="Manavathi B."/>
            <person name="Balasenthil S."/>
            <person name="Nair S.S."/>
            <person name="Yang Z."/>
            <person name="Sahin A.A."/>
            <person name="Kumar R."/>
        </authorList>
    </citation>
    <scope>FUNCTION</scope>
    <scope>INTERACTION WITH PI3K AND EGFR</scope>
    <scope>SUBCELLULAR LOCATION</scope>
</reference>
<reference key="12">
    <citation type="journal article" date="2005" name="Cancer Res.">
        <title>Proline-, glutamic acid-, and leucine-rich protein-1 is essential in growth factor regulation of signal transducers and activators of transcription 3 activation.</title>
        <authorList>
            <person name="Manavathi B."/>
            <person name="Nair S.S."/>
            <person name="Wang R.-A."/>
            <person name="Kumar R."/>
            <person name="Vadlamudi R.K."/>
        </authorList>
    </citation>
    <scope>FUNCTION</scope>
    <scope>INTERACTION WITH STAT3</scope>
</reference>
<reference key="13">
    <citation type="journal article" date="2005" name="Cell">
        <title>Physical association and coordinate function of the H3 K4 methyltransferase MLL1 and the H4 K16 acetyltransferase MOF.</title>
        <authorList>
            <person name="Dou Y."/>
            <person name="Milne T.A."/>
            <person name="Tackett A.J."/>
            <person name="Smith E.R."/>
            <person name="Fukuda A."/>
            <person name="Wysocka J."/>
            <person name="Allis C.D."/>
            <person name="Chait B.T."/>
            <person name="Hess J.L."/>
            <person name="Roeder R.G."/>
        </authorList>
    </citation>
    <scope>IDENTIFICATION IN THE MLL1/MLL COMPLEX</scope>
</reference>
<reference key="14">
    <citation type="journal article" date="2006" name="Cell">
        <title>Global, in vivo, and site-specific phosphorylation dynamics in signaling networks.</title>
        <authorList>
            <person name="Olsen J.V."/>
            <person name="Blagoev B."/>
            <person name="Gnad F."/>
            <person name="Macek B."/>
            <person name="Kumar C."/>
            <person name="Mortensen P."/>
            <person name="Mann M."/>
        </authorList>
    </citation>
    <scope>PHOSPHORYLATION [LARGE SCALE ANALYSIS] AT SER-481</scope>
    <scope>IDENTIFICATION BY MASS SPECTROMETRY [LARGE SCALE ANALYSIS]</scope>
    <source>
        <tissue>Cervix carcinoma</tissue>
    </source>
</reference>
<reference key="15">
    <citation type="journal article" date="2006" name="J. Biol. Chem.">
        <title>9-cis-retinoic acid up-regulates expression of transcriptional coregulator PELP1, a novel coactivator of the retinoid X receptor alpha pathway.</title>
        <authorList>
            <person name="Singh R.R."/>
            <person name="Gururaj A.E."/>
            <person name="Vadlamudi R.K."/>
            <person name="Kumar R."/>
        </authorList>
    </citation>
    <scope>FUNCTION</scope>
    <scope>INTERACTION WITH RXRA</scope>
</reference>
<reference key="16">
    <citation type="journal article" date="2006" name="J. Biol. Chem.">
        <title>Hepatocyte growth factor-regulated tyrosine kinase substrate (HRS) interacts with PELP1 and activates MAPK.</title>
        <authorList>
            <person name="Rayala S.K."/>
            <person name="den Hollander P."/>
            <person name="Balasenthil S."/>
            <person name="Molli P.R."/>
            <person name="Bean A.J."/>
            <person name="Vadlamudi R.K."/>
            <person name="Wang R.-A."/>
            <person name="Kumar R."/>
        </authorList>
    </citation>
    <scope>FUNCTION</scope>
    <scope>INTERACTION WITH HRS</scope>
</reference>
<reference key="17">
    <citation type="journal article" date="2006" name="Proc. Natl. Acad. Sci. U.S.A.">
        <title>NXP-2 association with SUMO-2 depends on lysines required for transcriptional repression.</title>
        <authorList>
            <person name="Rosendorff A."/>
            <person name="Sakakibara S."/>
            <person name="Lu S."/>
            <person name="Kieff E."/>
            <person name="Xuan Y."/>
            <person name="DiBacco A."/>
            <person name="Shi Y."/>
            <person name="Shi Y."/>
            <person name="Gill G."/>
        </authorList>
    </citation>
    <scope>INTERACTION WITH SUMO2</scope>
</reference>
<reference key="18">
    <citation type="journal article" date="2007" name="Mol. Endocrinol.">
        <title>Estrogen induces expression of BCAS3, a novel estrogen receptor-alpha coactivator, through proline-, glutamic acid-, and leucine-rich protein-1 (PELP1).</title>
        <authorList>
            <person name="Gururaj A.E."/>
            <person name="Peng S."/>
            <person name="Vadlamudi R.K."/>
            <person name="Kumar R."/>
        </authorList>
    </citation>
    <scope>INTERACTION WITH BCAS3</scope>
</reference>
<reference key="19">
    <citation type="journal article" date="2007" name="Science">
        <title>ATM and ATR substrate analysis reveals extensive protein networks responsive to DNA damage.</title>
        <authorList>
            <person name="Matsuoka S."/>
            <person name="Ballif B.A."/>
            <person name="Smogorzewska A."/>
            <person name="McDonald E.R. III"/>
            <person name="Hurov K.E."/>
            <person name="Luo J."/>
            <person name="Bakalarski C.E."/>
            <person name="Zhao Z."/>
            <person name="Solimini N."/>
            <person name="Lerenthal Y."/>
            <person name="Shiloh Y."/>
            <person name="Gygi S.P."/>
            <person name="Elledge S.J."/>
        </authorList>
    </citation>
    <scope>PHOSPHORYLATION [LARGE SCALE ANALYSIS] AT SER-1033</scope>
    <scope>IDENTIFICATION BY MASS SPECTROMETRY [LARGE SCALE ANALYSIS]</scope>
    <source>
        <tissue>Embryonic kidney</tissue>
    </source>
</reference>
<reference key="20">
    <citation type="journal article" date="2008" name="Proc. Natl. Acad. Sci. U.S.A.">
        <title>A quantitative atlas of mitotic phosphorylation.</title>
        <authorList>
            <person name="Dephoure N."/>
            <person name="Zhou C."/>
            <person name="Villen J."/>
            <person name="Beausoleil S.A."/>
            <person name="Bakalarski C.E."/>
            <person name="Elledge S.J."/>
            <person name="Gygi S.P."/>
        </authorList>
    </citation>
    <scope>PHOSPHORYLATION [LARGE SCALE ANALYSIS] AT SER-477; SER-481; THR-745 AND SER-1043</scope>
    <scope>IDENTIFICATION BY MASS SPECTROMETRY [LARGE SCALE ANALYSIS]</scope>
    <source>
        <tissue>Cervix carcinoma</tissue>
    </source>
</reference>
<reference key="21">
    <citation type="journal article" date="2009" name="Anal. Chem.">
        <title>Lys-N and trypsin cover complementary parts of the phosphoproteome in a refined SCX-based approach.</title>
        <authorList>
            <person name="Gauci S."/>
            <person name="Helbig A.O."/>
            <person name="Slijper M."/>
            <person name="Krijgsveld J."/>
            <person name="Heck A.J."/>
            <person name="Mohammed S."/>
        </authorList>
    </citation>
    <scope>ACETYLATION [LARGE SCALE ANALYSIS] AT ALA-2</scope>
    <scope>CLEAVAGE OF INITIATOR METHIONINE [LARGE SCALE ANALYSIS]</scope>
    <scope>IDENTIFICATION BY MASS SPECTROMETRY [LARGE SCALE ANALYSIS]</scope>
</reference>
<reference key="22">
    <citation type="journal article" date="2010" name="Sci. Signal.">
        <title>Quantitative phosphoproteomics reveals widespread full phosphorylation site occupancy during mitosis.</title>
        <authorList>
            <person name="Olsen J.V."/>
            <person name="Vermeulen M."/>
            <person name="Santamaria A."/>
            <person name="Kumar C."/>
            <person name="Miller M.L."/>
            <person name="Jensen L.J."/>
            <person name="Gnad F."/>
            <person name="Cox J."/>
            <person name="Jensen T.S."/>
            <person name="Nigg E.A."/>
            <person name="Brunak S."/>
            <person name="Mann M."/>
        </authorList>
    </citation>
    <scope>PHOSPHORYLATION [LARGE SCALE ANALYSIS] AT SER-477; SER-481 AND SER-1033</scope>
    <scope>IDENTIFICATION BY MASS SPECTROMETRY [LARGE SCALE ANALYSIS]</scope>
    <source>
        <tissue>Cervix carcinoma</tissue>
    </source>
</reference>
<reference key="23">
    <citation type="journal article" date="2011" name="BMC Syst. Biol.">
        <title>Initial characterization of the human central proteome.</title>
        <authorList>
            <person name="Burkard T.R."/>
            <person name="Planyavsky M."/>
            <person name="Kaupe I."/>
            <person name="Breitwieser F.P."/>
            <person name="Buerckstuemmer T."/>
            <person name="Bennett K.L."/>
            <person name="Superti-Furga G."/>
            <person name="Colinge J."/>
        </authorList>
    </citation>
    <scope>IDENTIFICATION BY MASS SPECTROMETRY [LARGE SCALE ANALYSIS]</scope>
</reference>
<reference key="24">
    <citation type="journal article" date="2011" name="EMBO J.">
        <title>The SUMO system controls nucleolar partitioning of a novel mammalian ribosome biogenesis complex.</title>
        <authorList>
            <person name="Finkbeiner E."/>
            <person name="Haindl M."/>
            <person name="Muller S."/>
        </authorList>
    </citation>
    <scope>IDENTIFICATION IN THE PELP1 COMPLEX</scope>
    <scope>SUBCELLULAR LOCATION</scope>
    <scope>SUMOYLATION AT LYS-826</scope>
    <scope>MUTAGENESIS OF LYS-826</scope>
</reference>
<reference key="25">
    <citation type="journal article" date="2011" name="Sci. Signal.">
        <title>System-wide temporal characterization of the proteome and phosphoproteome of human embryonic stem cell differentiation.</title>
        <authorList>
            <person name="Rigbolt K.T."/>
            <person name="Prokhorova T.A."/>
            <person name="Akimov V."/>
            <person name="Henningsen J."/>
            <person name="Johansen P.T."/>
            <person name="Kratchmarova I."/>
            <person name="Kassem M."/>
            <person name="Mann M."/>
            <person name="Olsen J.V."/>
            <person name="Blagoev B."/>
        </authorList>
    </citation>
    <scope>PHOSPHORYLATION [LARGE SCALE ANALYSIS] AT SER-477; SER-481; THR-488; THR-745; SER-1033 AND SER-1043</scope>
    <scope>IDENTIFICATION BY MASS SPECTROMETRY [LARGE SCALE ANALYSIS]</scope>
</reference>
<reference key="26">
    <citation type="journal article" date="2012" name="Mol. Cell. Proteomics">
        <title>Five friends of methylated chromatin target of protein-arginine-methyltransferase[prmt]-1 (chtop), a complex linking arginine methylation to desumoylation.</title>
        <authorList>
            <person name="Fanis P."/>
            <person name="Gillemans N."/>
            <person name="Aghajanirefah A."/>
            <person name="Pourfarzad F."/>
            <person name="Demmers J."/>
            <person name="Esteghamat F."/>
            <person name="Vadlamudi R.K."/>
            <person name="Grosveld F."/>
            <person name="Philipsen S."/>
            <person name="van Dijk T.B."/>
        </authorList>
    </citation>
    <scope>FUNCTION</scope>
    <scope>IDENTIFICATION IN THE 5FMC COMPLEX</scope>
    <scope>SUBCELLULAR LOCATION</scope>
</reference>
<reference key="27">
    <citation type="journal article" date="2012" name="Mol. Cell. Proteomics">
        <title>Comparative large-scale characterisation of plant vs. mammal proteins reveals similar and idiosyncratic N-alpha acetylation features.</title>
        <authorList>
            <person name="Bienvenut W.V."/>
            <person name="Sumpton D."/>
            <person name="Martinez A."/>
            <person name="Lilla S."/>
            <person name="Espagne C."/>
            <person name="Meinnel T."/>
            <person name="Giglione C."/>
        </authorList>
    </citation>
    <scope>ACETYLATION [LARGE SCALE ANALYSIS] AT ALA-2</scope>
    <scope>CLEAVAGE OF INITIATOR METHIONINE [LARGE SCALE ANALYSIS]</scope>
    <scope>IDENTIFICATION BY MASS SPECTROMETRY [LARGE SCALE ANALYSIS]</scope>
</reference>
<reference key="28">
    <citation type="journal article" date="2012" name="Proc. Natl. Acad. Sci. U.S.A.">
        <title>N-terminal acetylome analyses and functional insights of the N-terminal acetyltransferase NatB.</title>
        <authorList>
            <person name="Van Damme P."/>
            <person name="Lasa M."/>
            <person name="Polevoda B."/>
            <person name="Gazquez C."/>
            <person name="Elosegui-Artola A."/>
            <person name="Kim D.S."/>
            <person name="De Juan-Pardo E."/>
            <person name="Demeyer K."/>
            <person name="Hole K."/>
            <person name="Larrea E."/>
            <person name="Timmerman E."/>
            <person name="Prieto J."/>
            <person name="Arnesen T."/>
            <person name="Sherman F."/>
            <person name="Gevaert K."/>
            <person name="Aldabe R."/>
        </authorList>
    </citation>
    <scope>ACETYLATION [LARGE SCALE ANALYSIS] AT ALA-2</scope>
    <scope>CLEAVAGE OF INITIATOR METHIONINE [LARGE SCALE ANALYSIS]</scope>
    <scope>IDENTIFICATION BY MASS SPECTROMETRY [LARGE SCALE ANALYSIS]</scope>
</reference>
<reference key="29">
    <citation type="journal article" date="2013" name="J. Proteome Res.">
        <title>Toward a comprehensive characterization of a human cancer cell phosphoproteome.</title>
        <authorList>
            <person name="Zhou H."/>
            <person name="Di Palma S."/>
            <person name="Preisinger C."/>
            <person name="Peng M."/>
            <person name="Polat A.N."/>
            <person name="Heck A.J."/>
            <person name="Mohammed S."/>
        </authorList>
    </citation>
    <scope>PHOSPHORYLATION [LARGE SCALE ANALYSIS] AT SER-477; SER-481 AND SER-1033</scope>
    <scope>IDENTIFICATION BY MASS SPECTROMETRY [LARGE SCALE ANALYSIS]</scope>
    <source>
        <tissue>Cervix carcinoma</tissue>
        <tissue>Erythroleukemia</tissue>
    </source>
</reference>
<reference key="30">
    <citation type="journal article" date="2014" name="J. Proteomics">
        <title>An enzyme assisted RP-RPLC approach for in-depth analysis of human liver phosphoproteome.</title>
        <authorList>
            <person name="Bian Y."/>
            <person name="Song C."/>
            <person name="Cheng K."/>
            <person name="Dong M."/>
            <person name="Wang F."/>
            <person name="Huang J."/>
            <person name="Sun D."/>
            <person name="Wang L."/>
            <person name="Ye M."/>
            <person name="Zou H."/>
        </authorList>
    </citation>
    <scope>PHOSPHORYLATION [LARGE SCALE ANALYSIS] AT SER-481</scope>
    <scope>IDENTIFICATION BY MASS SPECTROMETRY [LARGE SCALE ANALYSIS]</scope>
    <source>
        <tissue>Liver</tissue>
    </source>
</reference>
<reference key="31">
    <citation type="journal article" date="2016" name="Mol. Cell">
        <title>The AAA ATPase MDN1 acts as a SUMO-targeted regulator in mammalian pre-ribosome remodeling.</title>
        <authorList>
            <person name="Raman N."/>
            <person name="Weir E."/>
            <person name="Mueller S."/>
        </authorList>
    </citation>
    <scope>SUMOYLATION</scope>
    <scope>INTERACTION WITH MDN1</scope>
</reference>
<dbReference type="EMBL" id="AF547989">
    <property type="protein sequence ID" value="AAN41255.1"/>
    <property type="molecule type" value="mRNA"/>
</dbReference>
<dbReference type="EMBL" id="BC002875">
    <property type="protein sequence ID" value="AAH02875.2"/>
    <property type="molecule type" value="mRNA"/>
</dbReference>
<dbReference type="EMBL" id="BC010457">
    <property type="protein sequence ID" value="AAH10457.2"/>
    <property type="molecule type" value="mRNA"/>
</dbReference>
<dbReference type="EMBL" id="BC069058">
    <property type="protein sequence ID" value="AAH69058.1"/>
    <property type="molecule type" value="mRNA"/>
</dbReference>
<dbReference type="EMBL" id="U88153">
    <property type="protein sequence ID" value="AAC17708.2"/>
    <property type="status" value="ALT_SEQ"/>
    <property type="molecule type" value="mRNA"/>
</dbReference>
<dbReference type="EMBL" id="AY882602">
    <property type="protein sequence ID" value="AAW80659.1"/>
    <property type="molecule type" value="mRNA"/>
</dbReference>
<dbReference type="CCDS" id="CCDS58503.3"/>
<dbReference type="RefSeq" id="NP_001265170.1">
    <property type="nucleotide sequence ID" value="NM_001278241.1"/>
</dbReference>
<dbReference type="RefSeq" id="NP_055204.4">
    <property type="nucleotide sequence ID" value="NM_014389.3"/>
</dbReference>
<dbReference type="PDB" id="7UWF">
    <property type="method" value="EM"/>
    <property type="resolution" value="2.70 A"/>
    <property type="chains" value="C/D=1-642"/>
</dbReference>
<dbReference type="PDB" id="8FL2">
    <property type="method" value="EM"/>
    <property type="resolution" value="2.67 A"/>
    <property type="chains" value="NX/NY=1-1130"/>
</dbReference>
<dbReference type="PDB" id="8FL3">
    <property type="method" value="EM"/>
    <property type="resolution" value="2.53 A"/>
    <property type="chains" value="NX/NY=1-1130"/>
</dbReference>
<dbReference type="PDB" id="8FL4">
    <property type="method" value="EM"/>
    <property type="resolution" value="2.89 A"/>
    <property type="chains" value="NX/NY=1-1130"/>
</dbReference>
<dbReference type="PDBsum" id="7UWF"/>
<dbReference type="PDBsum" id="8FL2"/>
<dbReference type="PDBsum" id="8FL3"/>
<dbReference type="PDBsum" id="8FL4"/>
<dbReference type="EMDB" id="EMD-29265"/>
<dbReference type="EMDB" id="EMD-29266"/>
<dbReference type="EMDB" id="EMD-29267"/>
<dbReference type="SMR" id="Q8IZL8"/>
<dbReference type="BioGRID" id="117973">
    <property type="interactions" value="213"/>
</dbReference>
<dbReference type="ComplexPortal" id="CPX-8081">
    <property type="entry name" value="Rixosome RNA degradation complex"/>
</dbReference>
<dbReference type="CORUM" id="Q8IZL8"/>
<dbReference type="ELM" id="Q8IZL8"/>
<dbReference type="FunCoup" id="Q8IZL8">
    <property type="interactions" value="2939"/>
</dbReference>
<dbReference type="IntAct" id="Q8IZL8">
    <property type="interactions" value="74"/>
</dbReference>
<dbReference type="MINT" id="Q8IZL8"/>
<dbReference type="STRING" id="9606.ENSP00000301396"/>
<dbReference type="GlyCosmos" id="Q8IZL8">
    <property type="glycosylation" value="3 sites, 1 glycan"/>
</dbReference>
<dbReference type="GlyGen" id="Q8IZL8">
    <property type="glycosylation" value="14 sites, 1 N-linked glycan (1 site), 1 O-linked glycan (6 sites)"/>
</dbReference>
<dbReference type="iPTMnet" id="Q8IZL8"/>
<dbReference type="MetOSite" id="Q8IZL8"/>
<dbReference type="PhosphoSitePlus" id="Q8IZL8"/>
<dbReference type="SwissPalm" id="Q8IZL8"/>
<dbReference type="BioMuta" id="PELP1"/>
<dbReference type="DMDM" id="115502553"/>
<dbReference type="CPTAC" id="CPTAC-1629"/>
<dbReference type="jPOST" id="Q8IZL8"/>
<dbReference type="MassIVE" id="Q8IZL8"/>
<dbReference type="PaxDb" id="9606-ENSP00000301396"/>
<dbReference type="PeptideAtlas" id="Q8IZL8"/>
<dbReference type="ProteomicsDB" id="71367"/>
<dbReference type="Pumba" id="Q8IZL8"/>
<dbReference type="Antibodypedia" id="23315">
    <property type="antibodies" value="294 antibodies from 33 providers"/>
</dbReference>
<dbReference type="DNASU" id="27043"/>
<dbReference type="Ensembl" id="ENST00000572293.7">
    <property type="protein sequence ID" value="ENSP00000460300.2"/>
    <property type="gene ID" value="ENSG00000141456.16"/>
</dbReference>
<dbReference type="Ensembl" id="ENST00000574876.5">
    <property type="protein sequence ID" value="ENSP00000461625.1"/>
    <property type="gene ID" value="ENSG00000141456.16"/>
</dbReference>
<dbReference type="GeneID" id="27043"/>
<dbReference type="KEGG" id="hsa:27043"/>
<dbReference type="MANE-Select" id="ENST00000572293.7">
    <property type="protein sequence ID" value="ENSP00000460300.2"/>
    <property type="RefSeq nucleotide sequence ID" value="NM_014389.3"/>
    <property type="RefSeq protein sequence ID" value="NP_055204.4"/>
</dbReference>
<dbReference type="UCSC" id="uc059zun.1">
    <property type="organism name" value="human"/>
</dbReference>
<dbReference type="AGR" id="HGNC:30134"/>
<dbReference type="CTD" id="27043"/>
<dbReference type="DisGeNET" id="27043"/>
<dbReference type="GeneCards" id="PELP1"/>
<dbReference type="HGNC" id="HGNC:30134">
    <property type="gene designation" value="PELP1"/>
</dbReference>
<dbReference type="HPA" id="ENSG00000141456">
    <property type="expression patterns" value="Low tissue specificity"/>
</dbReference>
<dbReference type="MIM" id="609455">
    <property type="type" value="gene"/>
</dbReference>
<dbReference type="neXtProt" id="NX_Q8IZL8"/>
<dbReference type="OpenTargets" id="ENSG00000141456"/>
<dbReference type="PharmGKB" id="PA142671186"/>
<dbReference type="VEuPathDB" id="HostDB:ENSG00000141456"/>
<dbReference type="eggNOG" id="ENOG502QQE7">
    <property type="taxonomic scope" value="Eukaryota"/>
</dbReference>
<dbReference type="GeneTree" id="ENSGT00730000111225"/>
<dbReference type="InParanoid" id="Q8IZL8"/>
<dbReference type="OMA" id="DFIACPP"/>
<dbReference type="OrthoDB" id="20900at2759"/>
<dbReference type="PAN-GO" id="Q8IZL8">
    <property type="GO annotations" value="2 GO annotations based on evolutionary models"/>
</dbReference>
<dbReference type="PhylomeDB" id="Q8IZL8"/>
<dbReference type="PathwayCommons" id="Q8IZL8"/>
<dbReference type="Reactome" id="R-HSA-6791226">
    <property type="pathway name" value="Major pathway of rRNA processing in the nucleolus and cytosol"/>
</dbReference>
<dbReference type="Reactome" id="R-HSA-8849473">
    <property type="pathway name" value="PTK6 Expression"/>
</dbReference>
<dbReference type="SignaLink" id="Q8IZL8"/>
<dbReference type="SIGNOR" id="Q8IZL8"/>
<dbReference type="BioGRID-ORCS" id="27043">
    <property type="hits" value="635 hits in 1056 CRISPR screens"/>
</dbReference>
<dbReference type="CD-CODE" id="91857CE7">
    <property type="entry name" value="Nucleolus"/>
</dbReference>
<dbReference type="ChiTaRS" id="PELP1">
    <property type="organism name" value="human"/>
</dbReference>
<dbReference type="GenomeRNAi" id="27043"/>
<dbReference type="Pharos" id="Q8IZL8">
    <property type="development level" value="Tbio"/>
</dbReference>
<dbReference type="PRO" id="PR:Q8IZL8"/>
<dbReference type="Proteomes" id="UP000005640">
    <property type="component" value="Chromosome 17"/>
</dbReference>
<dbReference type="RNAct" id="Q8IZL8">
    <property type="molecule type" value="protein"/>
</dbReference>
<dbReference type="Bgee" id="ENSG00000141456">
    <property type="expression patterns" value="Expressed in tendon of biceps brachii and 208 other cell types or tissues"/>
</dbReference>
<dbReference type="ExpressionAtlas" id="Q8IZL8">
    <property type="expression patterns" value="baseline and differential"/>
</dbReference>
<dbReference type="GO" id="GO:0005737">
    <property type="term" value="C:cytoplasm"/>
    <property type="evidence" value="ECO:0007669"/>
    <property type="project" value="UniProtKB-SubCell"/>
</dbReference>
<dbReference type="GO" id="GO:0000791">
    <property type="term" value="C:euchromatin"/>
    <property type="evidence" value="ECO:0000314"/>
    <property type="project" value="UniProtKB"/>
</dbReference>
<dbReference type="GO" id="GO:0016020">
    <property type="term" value="C:membrane"/>
    <property type="evidence" value="ECO:0007005"/>
    <property type="project" value="UniProtKB"/>
</dbReference>
<dbReference type="GO" id="GO:0071339">
    <property type="term" value="C:MLL1 complex"/>
    <property type="evidence" value="ECO:0000314"/>
    <property type="project" value="UniProtKB"/>
</dbReference>
<dbReference type="GO" id="GO:0005730">
    <property type="term" value="C:nucleolus"/>
    <property type="evidence" value="ECO:0000314"/>
    <property type="project" value="HPA"/>
</dbReference>
<dbReference type="GO" id="GO:0005654">
    <property type="term" value="C:nucleoplasm"/>
    <property type="evidence" value="ECO:0000314"/>
    <property type="project" value="HPA"/>
</dbReference>
<dbReference type="GO" id="GO:0005634">
    <property type="term" value="C:nucleus"/>
    <property type="evidence" value="ECO:0000314"/>
    <property type="project" value="UniProtKB"/>
</dbReference>
<dbReference type="GO" id="GO:0003682">
    <property type="term" value="F:chromatin binding"/>
    <property type="evidence" value="ECO:0000314"/>
    <property type="project" value="UniProtKB"/>
</dbReference>
<dbReference type="GO" id="GO:0003723">
    <property type="term" value="F:RNA binding"/>
    <property type="evidence" value="ECO:0007005"/>
    <property type="project" value="UniProtKB"/>
</dbReference>
<dbReference type="GO" id="GO:0032183">
    <property type="term" value="F:SUMO binding"/>
    <property type="evidence" value="ECO:0000315"/>
    <property type="project" value="UniProtKB"/>
</dbReference>
<dbReference type="GO" id="GO:0071391">
    <property type="term" value="P:cellular response to estrogen stimulus"/>
    <property type="evidence" value="ECO:0000314"/>
    <property type="project" value="UniProtKB"/>
</dbReference>
<dbReference type="GO" id="GO:0045944">
    <property type="term" value="P:positive regulation of transcription by RNA polymerase II"/>
    <property type="evidence" value="ECO:0000314"/>
    <property type="project" value="UniProtKB"/>
</dbReference>
<dbReference type="GO" id="GO:0006364">
    <property type="term" value="P:rRNA processing"/>
    <property type="evidence" value="ECO:0000318"/>
    <property type="project" value="GO_Central"/>
</dbReference>
<dbReference type="FunFam" id="1.25.10.10:FF:001118">
    <property type="entry name" value="Proline-, glutamic acid- and leucine-rich protein 1"/>
    <property type="match status" value="1"/>
</dbReference>
<dbReference type="Gene3D" id="1.25.10.10">
    <property type="entry name" value="Leucine-rich Repeat Variant"/>
    <property type="match status" value="1"/>
</dbReference>
<dbReference type="InterPro" id="IPR011989">
    <property type="entry name" value="ARM-like"/>
</dbReference>
<dbReference type="InterPro" id="IPR016024">
    <property type="entry name" value="ARM-type_fold"/>
</dbReference>
<dbReference type="InterPro" id="IPR012980">
    <property type="entry name" value="PELP1_middle"/>
</dbReference>
<dbReference type="InterPro" id="IPR012583">
    <property type="entry name" value="RIX1_N"/>
</dbReference>
<dbReference type="PANTHER" id="PTHR34105">
    <property type="entry name" value="PROLINE-, GLUTAMIC ACID- AND LEUCINE-RICH PROTEIN 1"/>
    <property type="match status" value="1"/>
</dbReference>
<dbReference type="PANTHER" id="PTHR34105:SF1">
    <property type="entry name" value="PROLINE-, GLUTAMIC ACID- AND LEUCINE-RICH PROTEIN 1"/>
    <property type="match status" value="1"/>
</dbReference>
<dbReference type="Pfam" id="PF08166">
    <property type="entry name" value="PELP1_HEAT"/>
    <property type="match status" value="2"/>
</dbReference>
<dbReference type="Pfam" id="PF08167">
    <property type="entry name" value="RIX1"/>
    <property type="match status" value="1"/>
</dbReference>
<dbReference type="PRINTS" id="PR01217">
    <property type="entry name" value="PRICHEXTENSN"/>
</dbReference>
<dbReference type="SUPFAM" id="SSF48371">
    <property type="entry name" value="ARM repeat"/>
    <property type="match status" value="1"/>
</dbReference>
<name>PELP1_HUMAN</name>
<keyword id="KW-0002">3D-structure</keyword>
<keyword id="KW-0007">Acetylation</keyword>
<keyword id="KW-0010">Activator</keyword>
<keyword id="KW-0963">Cytoplasm</keyword>
<keyword id="KW-1017">Isopeptide bond</keyword>
<keyword id="KW-0539">Nucleus</keyword>
<keyword id="KW-0597">Phosphoprotein</keyword>
<keyword id="KW-1267">Proteomics identification</keyword>
<keyword id="KW-1185">Reference proteome</keyword>
<keyword id="KW-0677">Repeat</keyword>
<keyword id="KW-0678">Repressor</keyword>
<keyword id="KW-0804">Transcription</keyword>
<keyword id="KW-0832">Ubl conjugation</keyword>
<protein>
    <recommendedName>
        <fullName>Proline-, glutamic acid- and leucine-rich protein 1</fullName>
    </recommendedName>
    <alternativeName>
        <fullName>Modulator of non-genomic activity of estrogen receptor</fullName>
    </alternativeName>
    <alternativeName>
        <fullName>Transcription factor HMX3</fullName>
    </alternativeName>
</protein>
<comment type="function">
    <text evidence="3 4 5 6 7 8 10 11 12 14 16 17">Coactivator of estrogen receptor-mediated transcription and a corepressor of other nuclear hormone receptors and sequence-specific transcription factors (PubMed:14963108). Plays a role in estrogen receptor (ER) genomic activity when present in the nuclear compartment by activating the ER target genes in a hormonal stimulation dependent manner. Can facilitate ER non-genomic signaling via SRC and PI3K interaction in the cytosol. Plays a role in E2-mediated cell cycle progression by interacting with RB1. May have important functional implications in ER/growth factor cross-talk. Interacts with several growth factor signaling components including EGFR and HRS. Functions as the key stabilizing component of the Five Friends of Methylated CHTOP (5FMC) complex; the 5FMC complex is recruited to ZNF148 by methylated CHTOP, leading to desumoylation of ZNF148 and subsequent transactivation of ZNF148 target genes. Component of the PELP1 complex involved in the nucleolar steps of 28S rRNA maturation and the subsequent nucleoplasmic transit of the pre-60S ribosomal subunit. Regulates pre-60S association of the critical remodeling factor MDN1 (PubMed:21326211). May promote tumorigenesis via its interaction with and modulation of several oncogenes including SRC, PI3K, STAT3 and EGFR. Plays a role in cancer cell metastasis via its ability to modulate E2-mediated cytoskeleton changes and cell migration via its interaction with SRC and PI3K.</text>
</comment>
<comment type="subunit">
    <text evidence="3 4 5 6 7 9 10 11 12 13 14 15 16 17 18">Interacts with HRS, RXRA, SUMO2, HDAC2, RB1 and STAT3. Interacts with PI3K, SRC and EGFR in cytoplasm. Interacts with ESR1, the interaction is enhanced by 17-beta-; the interaction increases ESR1 transcriptional activity (PubMed:11481323, PubMed:14963108). Interacts with CREBBP and EP300 in a ligand-dependent manner (PubMed:11481323). Forms two complexes in the presence of 17-beta-estradiol; one with SRC (via the SH3 domain) and ESR1 and another with LCK and ESR1 (PubMed:14963108). Interacts with histone H1 and H3 with a greater affinity for H1. Component of some MLL1/MLL complex, at least composed of the core components KMT2A/MLL1, ASH2L, HCFC1/HCF1, WDR5 and RBBP5, as well as the facultative components BACC1, CHD8, E2F6, HSP70, INO80C, KANSL1, LAS1L, MAX, MCRS1, MGA, KAT8/MOF, PELP1, PHF20, PRP31, RING2, RUVB1/TIP49A, RUVB2/TIP49B, SENP3, TAF1, TAF4, TAF6, TAF7, TAF9 and TEX10. Core component of the 5FMC complex, at least composed of PELP1, LAS1L, TEX10, WDR18 and SENP3; the complex interacts with methylated CHTOP and ZNF148. Interacts with NOL9. Interacts with BCAS3. Component of the PELP1 complex, composed of at least PELP1, TEX10 and WDR18. The complex interacts (via PELP1) with MDN1 (via its hexameric AAA ATPase ring) and the pre-60S ribosome particles (PubMed:21326211, PubMed:27814492).</text>
</comment>
<comment type="interaction">
    <interactant intactId="EBI-716449">
        <id>Q8IZL8</id>
    </interactant>
    <interactant intactId="EBI-120658">
        <id>P84243</id>
        <label>H3-3B</label>
    </interactant>
    <organismsDiffer>false</organismsDiffer>
    <experiments>11</experiments>
</comment>
<comment type="interaction">
    <interactant intactId="EBI-716449">
        <id>Q8IZL8</id>
    </interactant>
    <interactant intactId="EBI-710124">
        <id>O60341</id>
        <label>KDM1A</label>
    </interactant>
    <organismsDiffer>false</organismsDiffer>
    <experiments>6</experiments>
</comment>
<comment type="interaction">
    <interactant intactId="EBI-716449">
        <id>Q8IZL8</id>
    </interactant>
    <interactant intactId="EBI-1050480">
        <id>Q9NU22</id>
        <label>MDN1</label>
    </interactant>
    <organismsDiffer>false</organismsDiffer>
    <experiments>3</experiments>
</comment>
<comment type="interaction">
    <interactant intactId="EBI-716449">
        <id>Q8IZL8</id>
    </interactant>
    <interactant intactId="EBI-300010">
        <id>P19838</id>
        <label>NFKB1</label>
    </interactant>
    <organismsDiffer>false</organismsDiffer>
    <experiments>2</experiments>
</comment>
<comment type="interaction">
    <interactant intactId="EBI-716449">
        <id>Q8IZL8</id>
    </interactant>
    <interactant intactId="EBI-78579">
        <id>P06748</id>
        <label>NPM1</label>
    </interactant>
    <organismsDiffer>false</organismsDiffer>
    <experiments>4</experiments>
</comment>
<comment type="interaction">
    <interactant intactId="EBI-716449">
        <id>Q8IZL8</id>
    </interactant>
    <interactant intactId="EBI-2880236">
        <id>Q9H4L4</id>
        <label>SENP3</label>
    </interactant>
    <organismsDiffer>false</organismsDiffer>
    <experiments>10</experiments>
</comment>
<comment type="interaction">
    <interactant intactId="EBI-716449">
        <id>Q8IZL8</id>
    </interactant>
    <interactant intactId="EBI-473220">
        <id>P61956</id>
        <label>SUMO2</label>
    </interactant>
    <organismsDiffer>false</organismsDiffer>
    <experiments>4</experiments>
</comment>
<comment type="interaction">
    <interactant intactId="EBI-716449">
        <id>Q8IZL8</id>
    </interactant>
    <interactant intactId="EBI-2371062">
        <id>Q9NXF1</id>
        <label>TEX10</label>
    </interactant>
    <organismsDiffer>false</organismsDiffer>
    <experiments>6</experiments>
</comment>
<comment type="interaction">
    <interactant intactId="EBI-716449">
        <id>Q8IZL8</id>
    </interactant>
    <interactant intactId="EBI-727429">
        <id>Q9BV38</id>
        <label>WDR18</label>
    </interactant>
    <organismsDiffer>false</organismsDiffer>
    <experiments>18</experiments>
</comment>
<comment type="subcellular location">
    <subcellularLocation>
        <location evidence="16">Nucleus</location>
        <location evidence="16">Nucleolus</location>
    </subcellularLocation>
    <subcellularLocation>
        <location evidence="16">Nucleus</location>
        <location evidence="16">Nucleoplasm</location>
    </subcellularLocation>
    <subcellularLocation>
        <location evidence="3">Nucleus</location>
    </subcellularLocation>
    <subcellularLocation>
        <location evidence="3">Cytoplasm</location>
    </subcellularLocation>
    <text evidence="1 11">Mainly found in the nucleoplasm, with low levels detected in the cytoplasm (By similarity). Also found associated with the plasma membrane. Mainly in cytoplasm in a subset of breast tumors. Localization is widely deregulated in endometrial cancers with predominantly cytoplasm localization in high-grade endometrial tumors (PubMed:16140940).</text>
</comment>
<comment type="tissue specificity">
    <text evidence="3">Widely expressed.</text>
</comment>
<comment type="domain">
    <text evidence="7">The Glu-rich region mediates histones interaction.</text>
</comment>
<comment type="domain">
    <text evidence="3">The Leu-Xaa-Xaa-Leu-Leu (LXXLL) motifs are required for the association with nuclear receptor ESR1.</text>
</comment>
<comment type="PTM">
    <text evidence="16 18">Transiently sumoylated, preferentially conjugated to SUMO2 or SUMO3. Sumoylation causes nucleolar exclusion of PELP1 and promotes the recruitment of MDN1 to pre-60S particles. Desumoylation by SUMO isopeptidase SENP3 is needed to release both PELP1 and MDN1 from pre-ribosomes.</text>
</comment>
<comment type="miscellaneous">
    <text evidence="3">Expression is increased in breast tumor samples.</text>
</comment>
<comment type="similarity">
    <text evidence="19">Belongs to the RIX1/PELP1 family.</text>
</comment>
<comment type="caution">
    <text evidence="20 21">There was previous evidence for interactions with AR, NR3C1 and ESR2. However this paper was retracted as cell-based data was viewed as unreliable.</text>
</comment>
<comment type="sequence caution" evidence="19">
    <conflict type="frameshift">
        <sequence resource="EMBL-CDS" id="AAC17708"/>
    </conflict>
</comment>
<comment type="sequence caution" evidence="19">
    <conflict type="miscellaneous discrepancy">
        <sequence resource="EMBL-CDS" id="AAC17708"/>
    </conflict>
    <text>Intron retention.</text>
</comment>
<proteinExistence type="evidence at protein level"/>
<sequence>MAAAVLSGPSAGSAAGVPGGTGGLSAVSSGPRLRLLLLESVSGLLQPRTGSAVAPVHPPNRSAPHLPGLMCLLRLHGSVGGAQNLSALGALVSLSNARLSSIKTRFEGLCLLSLLVGESPTELFQQHCVSWLRSIQQVLQTQDPPATMELAVAVLRDLLRYAAQLPALFRDISMNHLPGLLTSLLGLRPECEQSALEGMKACMTYFPRACGSLKGKLASFFLSRVDALSPQLQQLACECYSRLPSLGAGFSQGLKHTESWEQELHSLLASLHTLLGALYEGAETAPVQNEGPGVEMLLSSEDGDAHVLLQLRQRFSGLARCLGLMLSSEFGAPVSVPVQEILDFICRTLSVSSKNISLHGDGPLRLLLLPSIHLEALDLLSALILACGSRLLRFGILIGRLLPQVLNSWSIGRDSLSPGQERPYSTVRTKVYAILELWVQVCGASAGMLQGGASGEALLTHLLSDISPPADALKLRSPRGSPDGSLQTGKPSAPKKLKLDVGEAMAPPSHRKGDSNANSDVCAAALRGLSRTILMCGPLIKEETHRRLHDLVLPLVMGVQQGEVLGSSPYTSSRCRRELYCLLLALLLAPSPRCPPPLACALQAFSLGQREDSLEVSSFCSEALVTCAALTHPRVPPLQPMGPTCPTPAPVPPPEAPSPFRAPPFHPPGPMPSVGSMPSAGPMPSAGPMPSAGPVPSARPGPPTTANHLGLSVPGLVSVPPRLLPGPENHRAGSNEDPILAPSGTPPPTIPPDETFGGRVPRPAFVHYDKEEASDVEISLESDSDDSVVIVPEGLPPLPPPPPSGATPPPIAPTGPPTASPPVPAKEEPEELPAAPGPLPPPPPPPPPVPGPVTLPPPQLVPEGTPGGGGPPALEEDLTVININSSDEEEEEEEEEEEEEEEEEEEEEDFEEEEEDEEEYFEEEEEEEEEFEEEFEEEEGELEEEEEEEDEEEEEELEEVEDLEFGTAGGEVEEGAPPPPTLPPALPPPESPPKVQPEPEPEPGLLLEVEEPGTEEERGADTAPTLAPEALPSQGEVEREGESPAAGPPPQELVEEEPSAPPTLLEEETEDGSDKVQPPPETPAEEEMETETEAEALQEKEQDDTAAMLADFIDCPPDDEKPPPPTEPDS</sequence>